<gene>
    <name type="primary">isaA</name>
    <name type="ordered locus">SAUSA300_2506</name>
</gene>
<evidence type="ECO:0000250" key="1"/>
<evidence type="ECO:0000305" key="2"/>
<protein>
    <recommendedName>
        <fullName>Probable transglycosylase IsaA</fullName>
        <ecNumber>3.2.-.-</ecNumber>
    </recommendedName>
    <alternativeName>
        <fullName>Immunodominant staphylococcal antigen A</fullName>
    </alternativeName>
</protein>
<organism>
    <name type="scientific">Staphylococcus aureus (strain USA300)</name>
    <dbReference type="NCBI Taxonomy" id="367830"/>
    <lineage>
        <taxon>Bacteria</taxon>
        <taxon>Bacillati</taxon>
        <taxon>Bacillota</taxon>
        <taxon>Bacilli</taxon>
        <taxon>Bacillales</taxon>
        <taxon>Staphylococcaceae</taxon>
        <taxon>Staphylococcus</taxon>
    </lineage>
</organism>
<reference key="1">
    <citation type="journal article" date="2006" name="Lancet">
        <title>Complete genome sequence of USA300, an epidemic clone of community-acquired meticillin-resistant Staphylococcus aureus.</title>
        <authorList>
            <person name="Diep B.A."/>
            <person name="Gill S.R."/>
            <person name="Chang R.F."/>
            <person name="Phan T.H."/>
            <person name="Chen J.H."/>
            <person name="Davidson M.G."/>
            <person name="Lin F."/>
            <person name="Lin J."/>
            <person name="Carleton H.A."/>
            <person name="Mongodin E.F."/>
            <person name="Sensabaugh G.F."/>
            <person name="Perdreau-Remington F."/>
        </authorList>
    </citation>
    <scope>NUCLEOTIDE SEQUENCE [LARGE SCALE GENOMIC DNA]</scope>
    <source>
        <strain>USA300</strain>
    </source>
</reference>
<feature type="signal peptide" evidence="1">
    <location>
        <begin position="1"/>
        <end position="29"/>
    </location>
</feature>
<feature type="chain" id="PRO_0000272658" description="Probable transglycosylase IsaA">
    <location>
        <begin position="30"/>
        <end position="233"/>
    </location>
</feature>
<keyword id="KW-0326">Glycosidase</keyword>
<keyword id="KW-0378">Hydrolase</keyword>
<keyword id="KW-0964">Secreted</keyword>
<keyword id="KW-0732">Signal</keyword>
<dbReference type="EC" id="3.2.-.-"/>
<dbReference type="EMBL" id="CP000255">
    <property type="protein sequence ID" value="ABD22428.1"/>
    <property type="molecule type" value="Genomic_DNA"/>
</dbReference>
<dbReference type="SMR" id="Q2FDT8"/>
<dbReference type="KEGG" id="saa:SAUSA300_2506"/>
<dbReference type="HOGENOM" id="CLU_099865_0_0_9"/>
<dbReference type="OMA" id="MWNTIVM"/>
<dbReference type="Proteomes" id="UP000001939">
    <property type="component" value="Chromosome"/>
</dbReference>
<dbReference type="GO" id="GO:0005576">
    <property type="term" value="C:extracellular region"/>
    <property type="evidence" value="ECO:0007669"/>
    <property type="project" value="UniProtKB-SubCell"/>
</dbReference>
<dbReference type="GO" id="GO:0016798">
    <property type="term" value="F:hydrolase activity, acting on glycosyl bonds"/>
    <property type="evidence" value="ECO:0007669"/>
    <property type="project" value="UniProtKB-KW"/>
</dbReference>
<dbReference type="Gene3D" id="1.10.530.10">
    <property type="match status" value="1"/>
</dbReference>
<dbReference type="InterPro" id="IPR023346">
    <property type="entry name" value="Lysozyme-like_dom_sf"/>
</dbReference>
<dbReference type="InterPro" id="IPR008258">
    <property type="entry name" value="Transglycosylase_SLT_dom_1"/>
</dbReference>
<dbReference type="Pfam" id="PF01464">
    <property type="entry name" value="SLT"/>
    <property type="match status" value="1"/>
</dbReference>
<dbReference type="SUPFAM" id="SSF53955">
    <property type="entry name" value="Lysozyme-like"/>
    <property type="match status" value="1"/>
</dbReference>
<proteinExistence type="inferred from homology"/>
<comment type="function">
    <text evidence="1">Is able to cleave peptidoglycan.</text>
</comment>
<comment type="subcellular location">
    <subcellularLocation>
        <location evidence="1">Secreted</location>
    </subcellularLocation>
</comment>
<comment type="similarity">
    <text evidence="2">Belongs to the transglycosylase family. IsaA subfamily.</text>
</comment>
<name>ISAA_STAA3</name>
<accession>Q2FDT8</accession>
<sequence length="233" mass="24203">MKKTIMASSLAVALGVTGYAAGTGHQAHAAEVNVDQAHLVDLAHNHQDQLNAAPIKDGAYDIHFVKDGFQYNFTSNGTTWSWSYEAANGQTAGFSNVAGADYTTSYNQGSNVQSVSYNAQSSNSNVEAVSAPTYHNYSTSTTSSSVRLSNGNTAGATGSSAAQIMAQRTGVSASTWAAIIARESNGQVNAYNPSGASGLFQTMPGWGPTNTVDQQINAAVKAYKAQGLGAWGF</sequence>